<gene>
    <name evidence="1" type="primary">ndhE</name>
</gene>
<evidence type="ECO:0000255" key="1">
    <source>
        <dbReference type="HAMAP-Rule" id="MF_01456"/>
    </source>
</evidence>
<feature type="chain" id="PRO_0000360363" description="NAD(P)H-quinone oxidoreductase subunit 4L, chloroplastic">
    <location>
        <begin position="1"/>
        <end position="101"/>
    </location>
</feature>
<feature type="transmembrane region" description="Helical" evidence="1">
    <location>
        <begin position="2"/>
        <end position="22"/>
    </location>
</feature>
<feature type="transmembrane region" description="Helical" evidence="1">
    <location>
        <begin position="32"/>
        <end position="52"/>
    </location>
</feature>
<feature type="transmembrane region" description="Helical" evidence="1">
    <location>
        <begin position="61"/>
        <end position="81"/>
    </location>
</feature>
<sequence>MMLEYVLGLSAYLFSIGIYGLITSRNMVRALMCLELILNAVNLNFVTFSDFFDSRQLKGNILSIFVISIAAAEAAIGPAIVSSIYRNRKSIRINQLNLLNK</sequence>
<geneLocation type="chloroplast"/>
<keyword id="KW-0150">Chloroplast</keyword>
<keyword id="KW-0472">Membrane</keyword>
<keyword id="KW-0520">NAD</keyword>
<keyword id="KW-0521">NADP</keyword>
<keyword id="KW-0934">Plastid</keyword>
<keyword id="KW-0618">Plastoquinone</keyword>
<keyword id="KW-0874">Quinone</keyword>
<keyword id="KW-0793">Thylakoid</keyword>
<keyword id="KW-1278">Translocase</keyword>
<keyword id="KW-0812">Transmembrane</keyword>
<keyword id="KW-1133">Transmembrane helix</keyword>
<keyword id="KW-0813">Transport</keyword>
<accession>Q14FA6</accession>
<proteinExistence type="inferred from homology"/>
<name>NU4LC_POPAL</name>
<organism>
    <name type="scientific">Populus alba</name>
    <name type="common">White poplar</name>
    <dbReference type="NCBI Taxonomy" id="43335"/>
    <lineage>
        <taxon>Eukaryota</taxon>
        <taxon>Viridiplantae</taxon>
        <taxon>Streptophyta</taxon>
        <taxon>Embryophyta</taxon>
        <taxon>Tracheophyta</taxon>
        <taxon>Spermatophyta</taxon>
        <taxon>Magnoliopsida</taxon>
        <taxon>eudicotyledons</taxon>
        <taxon>Gunneridae</taxon>
        <taxon>Pentapetalae</taxon>
        <taxon>rosids</taxon>
        <taxon>fabids</taxon>
        <taxon>Malpighiales</taxon>
        <taxon>Salicaceae</taxon>
        <taxon>Saliceae</taxon>
        <taxon>Populus</taxon>
    </lineage>
</organism>
<protein>
    <recommendedName>
        <fullName evidence="1">NAD(P)H-quinone oxidoreductase subunit 4L, chloroplastic</fullName>
        <ecNumber evidence="1">7.1.1.-</ecNumber>
    </recommendedName>
    <alternativeName>
        <fullName evidence="1">NAD(P)H dehydrogenase subunit 4L</fullName>
    </alternativeName>
    <alternativeName>
        <fullName evidence="1">NADH-plastoquinone oxidoreductase subunit 4L</fullName>
    </alternativeName>
</protein>
<dbReference type="EC" id="7.1.1.-" evidence="1"/>
<dbReference type="EMBL" id="AP008956">
    <property type="protein sequence ID" value="BAE97256.1"/>
    <property type="molecule type" value="Genomic_DNA"/>
</dbReference>
<dbReference type="RefSeq" id="YP_665608.1">
    <property type="nucleotide sequence ID" value="NC_008235.1"/>
</dbReference>
<dbReference type="SMR" id="Q14FA6"/>
<dbReference type="GeneID" id="4178231"/>
<dbReference type="KEGG" id="palz:4178231"/>
<dbReference type="OrthoDB" id="38820at3646"/>
<dbReference type="GO" id="GO:0009535">
    <property type="term" value="C:chloroplast thylakoid membrane"/>
    <property type="evidence" value="ECO:0007669"/>
    <property type="project" value="UniProtKB-SubCell"/>
</dbReference>
<dbReference type="GO" id="GO:0030964">
    <property type="term" value="C:NADH dehydrogenase complex"/>
    <property type="evidence" value="ECO:0007669"/>
    <property type="project" value="TreeGrafter"/>
</dbReference>
<dbReference type="GO" id="GO:0016655">
    <property type="term" value="F:oxidoreductase activity, acting on NAD(P)H, quinone or similar compound as acceptor"/>
    <property type="evidence" value="ECO:0007669"/>
    <property type="project" value="UniProtKB-UniRule"/>
</dbReference>
<dbReference type="GO" id="GO:0048038">
    <property type="term" value="F:quinone binding"/>
    <property type="evidence" value="ECO:0007669"/>
    <property type="project" value="UniProtKB-KW"/>
</dbReference>
<dbReference type="GO" id="GO:0042773">
    <property type="term" value="P:ATP synthesis coupled electron transport"/>
    <property type="evidence" value="ECO:0007669"/>
    <property type="project" value="InterPro"/>
</dbReference>
<dbReference type="GO" id="GO:0019684">
    <property type="term" value="P:photosynthesis, light reaction"/>
    <property type="evidence" value="ECO:0007669"/>
    <property type="project" value="UniProtKB-UniRule"/>
</dbReference>
<dbReference type="FunFam" id="1.10.287.3510:FF:000001">
    <property type="entry name" value="NADH-quinone oxidoreductase subunit K"/>
    <property type="match status" value="1"/>
</dbReference>
<dbReference type="Gene3D" id="1.10.287.3510">
    <property type="match status" value="1"/>
</dbReference>
<dbReference type="HAMAP" id="MF_01456">
    <property type="entry name" value="NDH1_NuoK"/>
    <property type="match status" value="1"/>
</dbReference>
<dbReference type="InterPro" id="IPR001133">
    <property type="entry name" value="NADH_UbQ_OxRdtase_chain4L/K"/>
</dbReference>
<dbReference type="InterPro" id="IPR039428">
    <property type="entry name" value="NUOK/Mnh_C1-like"/>
</dbReference>
<dbReference type="NCBIfam" id="NF004320">
    <property type="entry name" value="PRK05715.1-2"/>
    <property type="match status" value="1"/>
</dbReference>
<dbReference type="NCBIfam" id="NF004322">
    <property type="entry name" value="PRK05715.1-4"/>
    <property type="match status" value="1"/>
</dbReference>
<dbReference type="PANTHER" id="PTHR11434:SF16">
    <property type="entry name" value="NADH-UBIQUINONE OXIDOREDUCTASE CHAIN 4L"/>
    <property type="match status" value="1"/>
</dbReference>
<dbReference type="PANTHER" id="PTHR11434">
    <property type="entry name" value="NADH-UBIQUINONE OXIDOREDUCTASE SUBUNIT ND4L"/>
    <property type="match status" value="1"/>
</dbReference>
<dbReference type="Pfam" id="PF00420">
    <property type="entry name" value="Oxidored_q2"/>
    <property type="match status" value="1"/>
</dbReference>
<comment type="function">
    <text evidence="1">NDH shuttles electrons from NAD(P)H:plastoquinone, via FMN and iron-sulfur (Fe-S) centers, to quinones in the photosynthetic chain and possibly in a chloroplast respiratory chain. The immediate electron acceptor for the enzyme in this species is believed to be plastoquinone. Couples the redox reaction to proton translocation, and thus conserves the redox energy in a proton gradient.</text>
</comment>
<comment type="catalytic activity">
    <reaction evidence="1">
        <text>a plastoquinone + NADH + (n+1) H(+)(in) = a plastoquinol + NAD(+) + n H(+)(out)</text>
        <dbReference type="Rhea" id="RHEA:42608"/>
        <dbReference type="Rhea" id="RHEA-COMP:9561"/>
        <dbReference type="Rhea" id="RHEA-COMP:9562"/>
        <dbReference type="ChEBI" id="CHEBI:15378"/>
        <dbReference type="ChEBI" id="CHEBI:17757"/>
        <dbReference type="ChEBI" id="CHEBI:57540"/>
        <dbReference type="ChEBI" id="CHEBI:57945"/>
        <dbReference type="ChEBI" id="CHEBI:62192"/>
    </reaction>
</comment>
<comment type="catalytic activity">
    <reaction evidence="1">
        <text>a plastoquinone + NADPH + (n+1) H(+)(in) = a plastoquinol + NADP(+) + n H(+)(out)</text>
        <dbReference type="Rhea" id="RHEA:42612"/>
        <dbReference type="Rhea" id="RHEA-COMP:9561"/>
        <dbReference type="Rhea" id="RHEA-COMP:9562"/>
        <dbReference type="ChEBI" id="CHEBI:15378"/>
        <dbReference type="ChEBI" id="CHEBI:17757"/>
        <dbReference type="ChEBI" id="CHEBI:57783"/>
        <dbReference type="ChEBI" id="CHEBI:58349"/>
        <dbReference type="ChEBI" id="CHEBI:62192"/>
    </reaction>
</comment>
<comment type="subunit">
    <text evidence="1">NDH is composed of at least 16 different subunits, 5 of which are encoded in the nucleus.</text>
</comment>
<comment type="subcellular location">
    <subcellularLocation>
        <location evidence="1">Plastid</location>
        <location evidence="1">Chloroplast thylakoid membrane</location>
        <topology evidence="1">Multi-pass membrane protein</topology>
    </subcellularLocation>
</comment>
<comment type="similarity">
    <text evidence="1">Belongs to the complex I subunit 4L family.</text>
</comment>
<reference key="1">
    <citation type="submission" date="2005-03" db="EMBL/GenBank/DDBJ databases">
        <title>Complete structure of the chloroplast genome of Populus alba.</title>
        <authorList>
            <person name="Okumura S."/>
            <person name="Yamashita A."/>
            <person name="Kanamoto H."/>
            <person name="Hattori M."/>
            <person name="Takase H."/>
            <person name="Tomizawa K."/>
        </authorList>
    </citation>
    <scope>NUCLEOTIDE SEQUENCE [LARGE SCALE GENOMIC DNA]</scope>
</reference>